<reference key="1">
    <citation type="journal article" date="1994" name="J. Biol. Chem.">
        <title>A single residue determines the distinct pharmacology of rat and human natriuretic peptide receptor-C.</title>
        <authorList>
            <person name="Engel A.M."/>
            <person name="Schoenfeld J.R."/>
            <person name="Lowe D.G."/>
        </authorList>
    </citation>
    <scope>NUCLEOTIDE SEQUENCE [MRNA]</scope>
</reference>
<reference key="2">
    <citation type="journal article" date="1995" name="Circ. Res.">
        <title>Gene expression of natriuretic peptide receptors in myocardial cells.</title>
        <authorList>
            <person name="Lin X."/>
            <person name="Hanze J."/>
            <person name="Heese F."/>
            <person name="Sodmann R."/>
            <person name="Lang R.E."/>
        </authorList>
    </citation>
    <scope>NUCLEOTIDE SEQUENCE [MRNA] OF 1-443</scope>
</reference>
<comment type="function">
    <text evidence="4">Receptor for the natriuretic peptide hormones, binding with similar affinities atrial natriuretic peptide NPPA/ANP, brain natriuretic peptide NPPB/BNP, and C-type natriuretic peptide NPPC/CNP. May function as a clearance receptor for NPPA, NPPB and NPPC, regulating their local concentrations and effects. Acts as a regulator of osteoblast differentiation and bone growth by binding to its ligand osteocrin, thereby preventing binding between NPR3/NPR-C and natriuretic peptides, leading to increase cGMP production.</text>
</comment>
<comment type="subunit">
    <text evidence="3 4">Homodimer; disulfide-linked. Interacts with OSTN.</text>
</comment>
<comment type="subcellular location">
    <subcellularLocation>
        <location evidence="3">Cell membrane</location>
        <topology>Single-pass type I membrane protein</topology>
    </subcellularLocation>
</comment>
<comment type="miscellaneous">
    <text evidence="1">Has low affinity for peptide hormones in the absence of bound chloride.</text>
</comment>
<comment type="similarity">
    <text evidence="6">Belongs to the ANF receptor family.</text>
</comment>
<feature type="signal peptide" evidence="5">
    <location>
        <begin position="1"/>
        <end position="26"/>
    </location>
</feature>
<feature type="propeptide" id="PRO_0000012373" evidence="5">
    <location>
        <begin position="27"/>
        <end position="40"/>
    </location>
</feature>
<feature type="chain" id="PRO_0000012374" description="Atrial natriuretic peptide receptor 3">
    <location>
        <begin position="41"/>
        <end position="535"/>
    </location>
</feature>
<feature type="topological domain" description="Extracellular" evidence="5">
    <location>
        <begin position="41"/>
        <end position="477"/>
    </location>
</feature>
<feature type="transmembrane region" description="Helical" evidence="5">
    <location>
        <begin position="478"/>
        <end position="498"/>
    </location>
</feature>
<feature type="topological domain" description="Cytoplasmic" evidence="5">
    <location>
        <begin position="499"/>
        <end position="535"/>
    </location>
</feature>
<feature type="glycosylation site" description="N-linked (GlcNAc...) asparagine" evidence="5">
    <location>
        <position position="81"/>
    </location>
</feature>
<feature type="glycosylation site" description="N-linked (GlcNAc...) asparagine" evidence="5">
    <location>
        <position position="288"/>
    </location>
</feature>
<feature type="glycosylation site" description="N-linked (GlcNAc...) asparagine" evidence="5">
    <location>
        <position position="389"/>
    </location>
</feature>
<feature type="disulfide bond" evidence="2">
    <location>
        <begin position="103"/>
        <end position="131"/>
    </location>
</feature>
<feature type="disulfide bond" evidence="2">
    <location>
        <begin position="208"/>
        <end position="256"/>
    </location>
</feature>
<feature type="disulfide bond" description="Interchain" evidence="2">
    <location>
        <position position="468"/>
    </location>
</feature>
<feature type="sequence conflict" description="In Ref. 2; AAB35354." evidence="6" ref="2">
    <original>G</original>
    <variation>R</variation>
    <location>
        <position position="120"/>
    </location>
</feature>
<feature type="sequence conflict" description="In Ref. 2; AAB35354." evidence="6" ref="2">
    <original>D</original>
    <variation>H</variation>
    <location>
        <position position="124"/>
    </location>
</feature>
<feature type="sequence conflict" description="In Ref. 2; AAB35354." evidence="6" ref="2">
    <original>P</original>
    <variation>R</variation>
    <location>
        <position position="137"/>
    </location>
</feature>
<feature type="sequence conflict" description="In Ref. 2; AAB35354." evidence="6" ref="2">
    <original>D</original>
    <variation>H</variation>
    <location>
        <position position="240"/>
    </location>
</feature>
<feature type="sequence conflict" description="In Ref. 2; AAB35354." evidence="6" ref="2">
    <original>V</original>
    <variation>A</variation>
    <location>
        <position position="243"/>
    </location>
</feature>
<feature type="sequence conflict" description="In Ref. 2; AAB35354." evidence="6" ref="2">
    <original>AV</original>
    <variation>VA</variation>
    <location>
        <begin position="268"/>
        <end position="269"/>
    </location>
</feature>
<feature type="sequence conflict" description="In Ref. 2; AAB35354." evidence="6" ref="2">
    <original>G</original>
    <variation>R</variation>
    <location>
        <position position="293"/>
    </location>
</feature>
<feature type="sequence conflict" description="In Ref. 2; AAB35354." evidence="6" ref="2">
    <original>KRG</original>
    <variation>SRE</variation>
    <location>
        <begin position="298"/>
        <end position="300"/>
    </location>
</feature>
<feature type="sequence conflict" description="In Ref. 2; AAB35354." evidence="6" ref="2">
    <original>Y</original>
    <variation>H</variation>
    <location>
        <position position="363"/>
    </location>
</feature>
<organism>
    <name type="scientific">Rattus norvegicus</name>
    <name type="common">Rat</name>
    <dbReference type="NCBI Taxonomy" id="10116"/>
    <lineage>
        <taxon>Eukaryota</taxon>
        <taxon>Metazoa</taxon>
        <taxon>Chordata</taxon>
        <taxon>Craniata</taxon>
        <taxon>Vertebrata</taxon>
        <taxon>Euteleostomi</taxon>
        <taxon>Mammalia</taxon>
        <taxon>Eutheria</taxon>
        <taxon>Euarchontoglires</taxon>
        <taxon>Glires</taxon>
        <taxon>Rodentia</taxon>
        <taxon>Myomorpha</taxon>
        <taxon>Muroidea</taxon>
        <taxon>Muridae</taxon>
        <taxon>Murinae</taxon>
        <taxon>Rattus</taxon>
    </lineage>
</organism>
<keyword id="KW-1003">Cell membrane</keyword>
<keyword id="KW-1015">Disulfide bond</keyword>
<keyword id="KW-0325">Glycoprotein</keyword>
<keyword id="KW-0472">Membrane</keyword>
<keyword id="KW-0675">Receptor</keyword>
<keyword id="KW-1185">Reference proteome</keyword>
<keyword id="KW-0732">Signal</keyword>
<keyword id="KW-0812">Transmembrane</keyword>
<keyword id="KW-1133">Transmembrane helix</keyword>
<proteinExistence type="evidence at transcript level"/>
<sequence>MRSLLLFTFSACVLLARALLAGGASSGGGDTGPGNRRREREALAAQKIEVLVLLPRDDSYLFSLARVRPAIEYALRSVEGNGTGRKLLPPGTRFQVAYEDSDCGNRALFSLVDRVAAARGAKPDLILGPVCEYAAAPVARLASHWDLPMLSAGALAAGFQHKDTEYSHLTRVAPAYAKMGEMMLALFRHHHWSRAALLYSDDKLERNCYFTLEGVHEVFQEEGLHTSAYNFDETKDLDLDDIVRYIQGSERVVIMCASGDTIRRIMLAVHRHGMTSGDYAFFNIELFNSSSYGDGSWKRGDKHDFEAKQAYSSLQTVTLLRTAKPEFEKFSMEVKSSVEKQGLNEEDYVNMFVEGFHDAILLYVLALHEVLRAGYSKKDGGKIIQQTWNRTFEGIAGQVSIDANGDRYGDFSVVAMTDTEAGTQEVIGDYFGKEGRFKMRSNVKYPWGSLKLRIDETRIVEHTNSSPCKSCGLEESAVTGIVVGALLGAGLLMAFYFFRKKYRITIERRNHQEESNIGKHRELREDSIRSHFSVA</sequence>
<name>ANPRC_RAT</name>
<gene>
    <name type="primary">Npr3</name>
    <name type="synonym">Npr-c</name>
</gene>
<evidence type="ECO:0000250" key="1"/>
<evidence type="ECO:0000250" key="2">
    <source>
        <dbReference type="UniProtKB" id="P10730"/>
    </source>
</evidence>
<evidence type="ECO:0000250" key="3">
    <source>
        <dbReference type="UniProtKB" id="P17342"/>
    </source>
</evidence>
<evidence type="ECO:0000250" key="4">
    <source>
        <dbReference type="UniProtKB" id="P70180"/>
    </source>
</evidence>
<evidence type="ECO:0000255" key="5"/>
<evidence type="ECO:0000305" key="6"/>
<protein>
    <recommendedName>
        <fullName>Atrial natriuretic peptide receptor 3</fullName>
    </recommendedName>
    <alternativeName>
        <fullName>Atrial natriuretic peptide clearance receptor</fullName>
    </alternativeName>
    <alternativeName>
        <fullName>Atrial natriuretic peptide receptor type C</fullName>
        <shortName>ANP-C</shortName>
        <shortName>ANPR-C</shortName>
        <shortName>NPR-C</shortName>
    </alternativeName>
</protein>
<dbReference type="EMBL" id="L27339">
    <property type="protein sequence ID" value="AAA41721.1"/>
    <property type="molecule type" value="mRNA"/>
</dbReference>
<dbReference type="EMBL" id="S79624">
    <property type="protein sequence ID" value="AAB35354.1"/>
    <property type="molecule type" value="mRNA"/>
</dbReference>
<dbReference type="PIR" id="A54155">
    <property type="entry name" value="A54155"/>
</dbReference>
<dbReference type="RefSeq" id="NP_037000.1">
    <property type="nucleotide sequence ID" value="NM_012868.1"/>
</dbReference>
<dbReference type="SMR" id="P41740"/>
<dbReference type="FunCoup" id="P41740">
    <property type="interactions" value="355"/>
</dbReference>
<dbReference type="STRING" id="10116.ENSRNOP00000025966"/>
<dbReference type="BindingDB" id="P41740"/>
<dbReference type="ChEMBL" id="CHEMBL5169133"/>
<dbReference type="GlyCosmos" id="P41740">
    <property type="glycosylation" value="3 sites, No reported glycans"/>
</dbReference>
<dbReference type="GlyGen" id="P41740">
    <property type="glycosylation" value="3 sites"/>
</dbReference>
<dbReference type="iPTMnet" id="P41740"/>
<dbReference type="PhosphoSitePlus" id="P41740"/>
<dbReference type="PaxDb" id="10116-ENSRNOP00000025966"/>
<dbReference type="GeneID" id="25339"/>
<dbReference type="KEGG" id="rno:25339"/>
<dbReference type="AGR" id="RGD:3196"/>
<dbReference type="CTD" id="4883"/>
<dbReference type="RGD" id="3196">
    <property type="gene designation" value="Npr3"/>
</dbReference>
<dbReference type="VEuPathDB" id="HostDB:ENSRNOG00000019184"/>
<dbReference type="eggNOG" id="KOG1023">
    <property type="taxonomic scope" value="Eukaryota"/>
</dbReference>
<dbReference type="HOGENOM" id="CLU_013995_1_0_1"/>
<dbReference type="InParanoid" id="P41740"/>
<dbReference type="PhylomeDB" id="P41740"/>
<dbReference type="PRO" id="PR:P41740"/>
<dbReference type="Proteomes" id="UP000002494">
    <property type="component" value="Chromosome 2"/>
</dbReference>
<dbReference type="Bgee" id="ENSRNOG00000019184">
    <property type="expression patterns" value="Expressed in adult mammalian kidney and 16 other cell types or tissues"/>
</dbReference>
<dbReference type="GO" id="GO:0005886">
    <property type="term" value="C:plasma membrane"/>
    <property type="evidence" value="ECO:0000305"/>
    <property type="project" value="BHF-UCL"/>
</dbReference>
<dbReference type="GO" id="GO:0032991">
    <property type="term" value="C:protein-containing complex"/>
    <property type="evidence" value="ECO:0000266"/>
    <property type="project" value="RGD"/>
</dbReference>
<dbReference type="GO" id="GO:0031404">
    <property type="term" value="F:chloride ion binding"/>
    <property type="evidence" value="ECO:0000266"/>
    <property type="project" value="RGD"/>
</dbReference>
<dbReference type="GO" id="GO:0008528">
    <property type="term" value="F:G protein-coupled peptide receptor activity"/>
    <property type="evidence" value="ECO:0000314"/>
    <property type="project" value="BHF-UCL"/>
</dbReference>
<dbReference type="GO" id="GO:0042562">
    <property type="term" value="F:hormone binding"/>
    <property type="evidence" value="ECO:0000266"/>
    <property type="project" value="RGD"/>
</dbReference>
<dbReference type="GO" id="GO:0042802">
    <property type="term" value="F:identical protein binding"/>
    <property type="evidence" value="ECO:0000353"/>
    <property type="project" value="RGD"/>
</dbReference>
<dbReference type="GO" id="GO:0016941">
    <property type="term" value="F:natriuretic peptide receptor activity"/>
    <property type="evidence" value="ECO:0000314"/>
    <property type="project" value="BHF-UCL"/>
</dbReference>
<dbReference type="GO" id="GO:0042277">
    <property type="term" value="F:peptide binding"/>
    <property type="evidence" value="ECO:0000266"/>
    <property type="project" value="RGD"/>
</dbReference>
<dbReference type="GO" id="GO:0017046">
    <property type="term" value="F:peptide hormone binding"/>
    <property type="evidence" value="ECO:0000314"/>
    <property type="project" value="BHF-UCL"/>
</dbReference>
<dbReference type="GO" id="GO:0042803">
    <property type="term" value="F:protein homodimerization activity"/>
    <property type="evidence" value="ECO:0000266"/>
    <property type="project" value="RGD"/>
</dbReference>
<dbReference type="GO" id="GO:0007193">
    <property type="term" value="P:adenylate cyclase-inhibiting G protein-coupled receptor signaling pathway"/>
    <property type="evidence" value="ECO:0000315"/>
    <property type="project" value="RGD"/>
</dbReference>
<dbReference type="GO" id="GO:0001525">
    <property type="term" value="P:angiogenesis"/>
    <property type="evidence" value="ECO:0000266"/>
    <property type="project" value="RGD"/>
</dbReference>
<dbReference type="GO" id="GO:0001974">
    <property type="term" value="P:blood vessel remodeling"/>
    <property type="evidence" value="ECO:0000266"/>
    <property type="project" value="RGD"/>
</dbReference>
<dbReference type="GO" id="GO:0120163">
    <property type="term" value="P:negative regulation of cold-induced thermogenesis"/>
    <property type="evidence" value="ECO:0000250"/>
    <property type="project" value="YuBioLab"/>
</dbReference>
<dbReference type="GO" id="GO:0048662">
    <property type="term" value="P:negative regulation of smooth muscle cell proliferation"/>
    <property type="evidence" value="ECO:0000315"/>
    <property type="project" value="RGD"/>
</dbReference>
<dbReference type="GO" id="GO:0002158">
    <property type="term" value="P:osteoclast proliferation"/>
    <property type="evidence" value="ECO:0000250"/>
    <property type="project" value="UniProtKB"/>
</dbReference>
<dbReference type="GO" id="GO:0007200">
    <property type="term" value="P:phospholipase C-activating G protein-coupled receptor signaling pathway"/>
    <property type="evidence" value="ECO:0000315"/>
    <property type="project" value="RGD"/>
</dbReference>
<dbReference type="GO" id="GO:0051000">
    <property type="term" value="P:positive regulation of nitric-oxide synthase activity"/>
    <property type="evidence" value="ECO:0000314"/>
    <property type="project" value="BHF-UCL"/>
</dbReference>
<dbReference type="GO" id="GO:0090187">
    <property type="term" value="P:positive regulation of pancreatic juice secretion"/>
    <property type="evidence" value="ECO:0000315"/>
    <property type="project" value="RGD"/>
</dbReference>
<dbReference type="GO" id="GO:0035810">
    <property type="term" value="P:positive regulation of urine volume"/>
    <property type="evidence" value="ECO:0000250"/>
    <property type="project" value="UniProtKB"/>
</dbReference>
<dbReference type="GO" id="GO:0008217">
    <property type="term" value="P:regulation of blood pressure"/>
    <property type="evidence" value="ECO:0000315"/>
    <property type="project" value="RGD"/>
</dbReference>
<dbReference type="GO" id="GO:0033688">
    <property type="term" value="P:regulation of osteoblast proliferation"/>
    <property type="evidence" value="ECO:0000250"/>
    <property type="project" value="UniProtKB"/>
</dbReference>
<dbReference type="GO" id="GO:0002931">
    <property type="term" value="P:response to ischemia"/>
    <property type="evidence" value="ECO:0000266"/>
    <property type="project" value="RGD"/>
</dbReference>
<dbReference type="GO" id="GO:0007165">
    <property type="term" value="P:signal transduction"/>
    <property type="evidence" value="ECO:0000318"/>
    <property type="project" value="GO_Central"/>
</dbReference>
<dbReference type="GO" id="GO:0001501">
    <property type="term" value="P:skeletal system development"/>
    <property type="evidence" value="ECO:0000250"/>
    <property type="project" value="UniProtKB"/>
</dbReference>
<dbReference type="GO" id="GO:0042311">
    <property type="term" value="P:vasodilation"/>
    <property type="evidence" value="ECO:0000315"/>
    <property type="project" value="RGD"/>
</dbReference>
<dbReference type="CDD" id="cd06386">
    <property type="entry name" value="PBP1_NPR_C"/>
    <property type="match status" value="1"/>
</dbReference>
<dbReference type="CDD" id="cd12841">
    <property type="entry name" value="TM_EphA1"/>
    <property type="match status" value="1"/>
</dbReference>
<dbReference type="FunFam" id="3.40.50.2300:FF:000147">
    <property type="entry name" value="Atrial natriuretic peptide receptor 3"/>
    <property type="match status" value="1"/>
</dbReference>
<dbReference type="FunFam" id="3.40.50.2300:FF:000246">
    <property type="entry name" value="Atrial natriuretic peptide receptor 3"/>
    <property type="match status" value="1"/>
</dbReference>
<dbReference type="Gene3D" id="3.40.50.2300">
    <property type="match status" value="2"/>
</dbReference>
<dbReference type="InterPro" id="IPR001828">
    <property type="entry name" value="ANF_lig-bd_rcpt"/>
</dbReference>
<dbReference type="InterPro" id="IPR052612">
    <property type="entry name" value="ANP_Clearance_Receptor"/>
</dbReference>
<dbReference type="InterPro" id="IPR001170">
    <property type="entry name" value="ANPR/GUC"/>
</dbReference>
<dbReference type="InterPro" id="IPR028082">
    <property type="entry name" value="Peripla_BP_I"/>
</dbReference>
<dbReference type="PANTHER" id="PTHR44755:SF1">
    <property type="entry name" value="ATRIAL NATRIURETIC PEPTIDE RECEPTOR 3"/>
    <property type="match status" value="1"/>
</dbReference>
<dbReference type="PANTHER" id="PTHR44755">
    <property type="entry name" value="NATRIURETIC PEPTIDE RECEPTOR 3-RELATED"/>
    <property type="match status" value="1"/>
</dbReference>
<dbReference type="Pfam" id="PF01094">
    <property type="entry name" value="ANF_receptor"/>
    <property type="match status" value="1"/>
</dbReference>
<dbReference type="PRINTS" id="PR00255">
    <property type="entry name" value="NATPEPTIDER"/>
</dbReference>
<dbReference type="SUPFAM" id="SSF53822">
    <property type="entry name" value="Periplasmic binding protein-like I"/>
    <property type="match status" value="1"/>
</dbReference>
<dbReference type="PROSITE" id="PS00458">
    <property type="entry name" value="ANF_RECEPTORS"/>
    <property type="match status" value="1"/>
</dbReference>
<accession>P41740</accession>
<accession>Q64156</accession>